<accession>Q57I62</accession>
<reference key="1">
    <citation type="journal article" date="2005" name="Nucleic Acids Res.">
        <title>The genome sequence of Salmonella enterica serovar Choleraesuis, a highly invasive and resistant zoonotic pathogen.</title>
        <authorList>
            <person name="Chiu C.-H."/>
            <person name="Tang P."/>
            <person name="Chu C."/>
            <person name="Hu S."/>
            <person name="Bao Q."/>
            <person name="Yu J."/>
            <person name="Chou Y.-Y."/>
            <person name="Wang H.-S."/>
            <person name="Lee Y.-S."/>
        </authorList>
    </citation>
    <scope>NUCLEOTIDE SEQUENCE [LARGE SCALE GENOMIC DNA]</scope>
    <source>
        <strain>SC-B67</strain>
    </source>
</reference>
<dbReference type="EMBL" id="AE017220">
    <property type="protein sequence ID" value="AAX67600.1"/>
    <property type="molecule type" value="Genomic_DNA"/>
</dbReference>
<dbReference type="RefSeq" id="WP_000824212.1">
    <property type="nucleotide sequence ID" value="NC_006905.1"/>
</dbReference>
<dbReference type="SMR" id="Q57I62"/>
<dbReference type="KEGG" id="sec:SCH_3694"/>
<dbReference type="HOGENOM" id="CLU_159877_2_0_6"/>
<dbReference type="Proteomes" id="UP000000538">
    <property type="component" value="Chromosome"/>
</dbReference>
<dbReference type="InterPro" id="IPR048144">
    <property type="entry name" value="YicS_fam"/>
</dbReference>
<dbReference type="NCBIfam" id="NF041639">
    <property type="entry name" value="YicS_fam"/>
    <property type="match status" value="1"/>
</dbReference>
<organism>
    <name type="scientific">Salmonella choleraesuis (strain SC-B67)</name>
    <dbReference type="NCBI Taxonomy" id="321314"/>
    <lineage>
        <taxon>Bacteria</taxon>
        <taxon>Pseudomonadati</taxon>
        <taxon>Pseudomonadota</taxon>
        <taxon>Gammaproteobacteria</taxon>
        <taxon>Enterobacterales</taxon>
        <taxon>Enterobacteriaceae</taxon>
        <taxon>Salmonella</taxon>
    </lineage>
</organism>
<gene>
    <name type="primary">yicS</name>
    <name type="ordered locus">SCH_3694</name>
</gene>
<sequence length="97" mass="10953">MKRKTLLLIAALVALPGVTYADSPFSSLQSAHEKNTILKDLRKMCTPKGALTDEAWEKKIMASEGNQQHIREAMIAIERNNQHNYWQALGKVECPEM</sequence>
<protein>
    <recommendedName>
        <fullName>Uncharacterized protein YicS</fullName>
    </recommendedName>
</protein>
<name>YICS_SALCH</name>
<feature type="chain" id="PRO_0000262298" description="Uncharacterized protein YicS">
    <location>
        <begin position="1"/>
        <end position="97"/>
    </location>
</feature>
<proteinExistence type="predicted"/>